<proteinExistence type="inferred from homology"/>
<dbReference type="EC" id="4.3.3.6" evidence="1"/>
<dbReference type="EMBL" id="AE001437">
    <property type="protein sequence ID" value="AAK78572.1"/>
    <property type="molecule type" value="Genomic_DNA"/>
</dbReference>
<dbReference type="PIR" id="A96973">
    <property type="entry name" value="A96973"/>
</dbReference>
<dbReference type="RefSeq" id="NP_347232.1">
    <property type="nucleotide sequence ID" value="NC_003030.1"/>
</dbReference>
<dbReference type="RefSeq" id="WP_010963914.1">
    <property type="nucleotide sequence ID" value="NC_003030.1"/>
</dbReference>
<dbReference type="SMR" id="Q97LG7"/>
<dbReference type="STRING" id="272562.CA_C0594"/>
<dbReference type="GeneID" id="44997105"/>
<dbReference type="KEGG" id="cac:CA_C0594"/>
<dbReference type="PATRIC" id="fig|272562.8.peg.797"/>
<dbReference type="eggNOG" id="COG0214">
    <property type="taxonomic scope" value="Bacteria"/>
</dbReference>
<dbReference type="HOGENOM" id="CLU_055352_1_0_9"/>
<dbReference type="OrthoDB" id="9772545at2"/>
<dbReference type="UniPathway" id="UPA00245"/>
<dbReference type="Proteomes" id="UP000000814">
    <property type="component" value="Chromosome"/>
</dbReference>
<dbReference type="GO" id="GO:0036381">
    <property type="term" value="F:pyridoxal 5'-phosphate synthase (glutamine hydrolysing) activity"/>
    <property type="evidence" value="ECO:0007669"/>
    <property type="project" value="UniProtKB-UniRule"/>
</dbReference>
<dbReference type="GO" id="GO:0006520">
    <property type="term" value="P:amino acid metabolic process"/>
    <property type="evidence" value="ECO:0007669"/>
    <property type="project" value="TreeGrafter"/>
</dbReference>
<dbReference type="GO" id="GO:0042823">
    <property type="term" value="P:pyridoxal phosphate biosynthetic process"/>
    <property type="evidence" value="ECO:0007669"/>
    <property type="project" value="UniProtKB-UniRule"/>
</dbReference>
<dbReference type="GO" id="GO:0008615">
    <property type="term" value="P:pyridoxine biosynthetic process"/>
    <property type="evidence" value="ECO:0007669"/>
    <property type="project" value="TreeGrafter"/>
</dbReference>
<dbReference type="CDD" id="cd04727">
    <property type="entry name" value="pdxS"/>
    <property type="match status" value="1"/>
</dbReference>
<dbReference type="FunFam" id="3.20.20.70:FF:000001">
    <property type="entry name" value="Pyridoxine biosynthesis protein PDX1"/>
    <property type="match status" value="1"/>
</dbReference>
<dbReference type="Gene3D" id="3.20.20.70">
    <property type="entry name" value="Aldolase class I"/>
    <property type="match status" value="1"/>
</dbReference>
<dbReference type="HAMAP" id="MF_01824">
    <property type="entry name" value="PdxS"/>
    <property type="match status" value="1"/>
</dbReference>
<dbReference type="InterPro" id="IPR013785">
    <property type="entry name" value="Aldolase_TIM"/>
</dbReference>
<dbReference type="InterPro" id="IPR001852">
    <property type="entry name" value="PdxS/SNZ"/>
</dbReference>
<dbReference type="InterPro" id="IPR033755">
    <property type="entry name" value="PdxS/SNZ_N"/>
</dbReference>
<dbReference type="InterPro" id="IPR011060">
    <property type="entry name" value="RibuloseP-bd_barrel"/>
</dbReference>
<dbReference type="NCBIfam" id="NF003215">
    <property type="entry name" value="PRK04180.1"/>
    <property type="match status" value="1"/>
</dbReference>
<dbReference type="NCBIfam" id="TIGR00343">
    <property type="entry name" value="pyridoxal 5'-phosphate synthase lyase subunit PdxS"/>
    <property type="match status" value="1"/>
</dbReference>
<dbReference type="PANTHER" id="PTHR31829">
    <property type="entry name" value="PYRIDOXAL 5'-PHOSPHATE SYNTHASE SUBUNIT SNZ1-RELATED"/>
    <property type="match status" value="1"/>
</dbReference>
<dbReference type="PANTHER" id="PTHR31829:SF0">
    <property type="entry name" value="PYRIDOXAL 5'-PHOSPHATE SYNTHASE SUBUNIT SNZ1-RELATED"/>
    <property type="match status" value="1"/>
</dbReference>
<dbReference type="Pfam" id="PF01680">
    <property type="entry name" value="SOR_SNZ"/>
    <property type="match status" value="1"/>
</dbReference>
<dbReference type="PIRSF" id="PIRSF029271">
    <property type="entry name" value="Pdx1"/>
    <property type="match status" value="1"/>
</dbReference>
<dbReference type="SUPFAM" id="SSF51366">
    <property type="entry name" value="Ribulose-phoshate binding barrel"/>
    <property type="match status" value="1"/>
</dbReference>
<dbReference type="PROSITE" id="PS01235">
    <property type="entry name" value="PDXS_SNZ_1"/>
    <property type="match status" value="1"/>
</dbReference>
<dbReference type="PROSITE" id="PS51129">
    <property type="entry name" value="PDXS_SNZ_2"/>
    <property type="match status" value="1"/>
</dbReference>
<keyword id="KW-0456">Lyase</keyword>
<keyword id="KW-0663">Pyridoxal phosphate</keyword>
<keyword id="KW-1185">Reference proteome</keyword>
<keyword id="KW-0704">Schiff base</keyword>
<feature type="chain" id="PRO_0000109385" description="Pyridoxal 5'-phosphate synthase subunit PdxS">
    <location>
        <begin position="1"/>
        <end position="291"/>
    </location>
</feature>
<feature type="active site" description="Schiff-base intermediate with D-ribose 5-phosphate" evidence="1">
    <location>
        <position position="80"/>
    </location>
</feature>
<feature type="binding site" evidence="1">
    <location>
        <position position="23"/>
    </location>
    <ligand>
        <name>D-ribose 5-phosphate</name>
        <dbReference type="ChEBI" id="CHEBI:78346"/>
    </ligand>
</feature>
<feature type="binding site" evidence="1">
    <location>
        <position position="152"/>
    </location>
    <ligand>
        <name>D-ribose 5-phosphate</name>
        <dbReference type="ChEBI" id="CHEBI:78346"/>
    </ligand>
</feature>
<feature type="binding site" evidence="1">
    <location>
        <position position="164"/>
    </location>
    <ligand>
        <name>D-glyceraldehyde 3-phosphate</name>
        <dbReference type="ChEBI" id="CHEBI:59776"/>
    </ligand>
</feature>
<feature type="binding site" evidence="1">
    <location>
        <position position="213"/>
    </location>
    <ligand>
        <name>D-ribose 5-phosphate</name>
        <dbReference type="ChEBI" id="CHEBI:78346"/>
    </ligand>
</feature>
<feature type="binding site" evidence="1">
    <location>
        <begin position="234"/>
        <end position="235"/>
    </location>
    <ligand>
        <name>D-ribose 5-phosphate</name>
        <dbReference type="ChEBI" id="CHEBI:78346"/>
    </ligand>
</feature>
<reference key="1">
    <citation type="journal article" date="2001" name="J. Bacteriol.">
        <title>Genome sequence and comparative analysis of the solvent-producing bacterium Clostridium acetobutylicum.</title>
        <authorList>
            <person name="Noelling J."/>
            <person name="Breton G."/>
            <person name="Omelchenko M.V."/>
            <person name="Makarova K.S."/>
            <person name="Zeng Q."/>
            <person name="Gibson R."/>
            <person name="Lee H.M."/>
            <person name="Dubois J."/>
            <person name="Qiu D."/>
            <person name="Hitti J."/>
            <person name="Wolf Y.I."/>
            <person name="Tatusov R.L."/>
            <person name="Sabathe F."/>
            <person name="Doucette-Stamm L.A."/>
            <person name="Soucaille P."/>
            <person name="Daly M.J."/>
            <person name="Bennett G.N."/>
            <person name="Koonin E.V."/>
            <person name="Smith D.R."/>
        </authorList>
    </citation>
    <scope>NUCLEOTIDE SEQUENCE [LARGE SCALE GENOMIC DNA]</scope>
    <source>
        <strain>ATCC 824 / DSM 792 / JCM 1419 / IAM 19013 / LMG 5710 / NBRC 13948 / NRRL B-527 / VKM B-1787 / 2291 / W</strain>
    </source>
</reference>
<accession>Q97LG7</accession>
<sequence>MGMDRSDMNKNLAQMLKGGVIMDVINKEQAIIAEKAGACAVMALERVPADIRKQGGVARMSDPKMIKEIRESVTIPVMAKVRIGHFVEAEILQSLGIDFIDESEVLTPADDSYHIDKKAFKVPFVCGARNLGEALRRIGEGASMIRTKGEAGTGNVVEAVKHMRTVMDEIRRVKNAAKEEIMTIAKELGAPYDLVQYVWMNGRLPVVNFAAGGVATPADAALMIRLGAEGVFVGSGIFKSENPEKRARAIVMAAAYYDDPKVLEEVSEDLGEPMYGLEISDIKDRYAERGW</sequence>
<protein>
    <recommendedName>
        <fullName evidence="1">Pyridoxal 5'-phosphate synthase subunit PdxS</fullName>
        <shortName evidence="1">PLP synthase subunit PdxS</shortName>
        <ecNumber evidence="1">4.3.3.6</ecNumber>
    </recommendedName>
    <alternativeName>
        <fullName evidence="1">Pdx1</fullName>
    </alternativeName>
</protein>
<comment type="function">
    <text evidence="1">Catalyzes the formation of pyridoxal 5'-phosphate from ribose 5-phosphate (RBP), glyceraldehyde 3-phosphate (G3P) and ammonia. The ammonia is provided by the PdxT subunit. Can also use ribulose 5-phosphate and dihydroxyacetone phosphate as substrates, resulting from enzyme-catalyzed isomerization of RBP and G3P, respectively.</text>
</comment>
<comment type="catalytic activity">
    <reaction evidence="1">
        <text>aldehydo-D-ribose 5-phosphate + D-glyceraldehyde 3-phosphate + L-glutamine = pyridoxal 5'-phosphate + L-glutamate + phosphate + 3 H2O + H(+)</text>
        <dbReference type="Rhea" id="RHEA:31507"/>
        <dbReference type="ChEBI" id="CHEBI:15377"/>
        <dbReference type="ChEBI" id="CHEBI:15378"/>
        <dbReference type="ChEBI" id="CHEBI:29985"/>
        <dbReference type="ChEBI" id="CHEBI:43474"/>
        <dbReference type="ChEBI" id="CHEBI:58273"/>
        <dbReference type="ChEBI" id="CHEBI:58359"/>
        <dbReference type="ChEBI" id="CHEBI:59776"/>
        <dbReference type="ChEBI" id="CHEBI:597326"/>
        <dbReference type="EC" id="4.3.3.6"/>
    </reaction>
</comment>
<comment type="pathway">
    <text evidence="1">Cofactor biosynthesis; pyridoxal 5'-phosphate biosynthesis.</text>
</comment>
<comment type="subunit">
    <text evidence="1">In the presence of PdxT, forms a dodecamer of heterodimers.</text>
</comment>
<comment type="similarity">
    <text evidence="1">Belongs to the PdxS/SNZ family.</text>
</comment>
<evidence type="ECO:0000255" key="1">
    <source>
        <dbReference type="HAMAP-Rule" id="MF_01824"/>
    </source>
</evidence>
<name>PDXS_CLOAB</name>
<gene>
    <name evidence="1" type="primary">pdxS</name>
    <name type="ordered locus">CA_C0594</name>
</gene>
<organism>
    <name type="scientific">Clostridium acetobutylicum (strain ATCC 824 / DSM 792 / JCM 1419 / IAM 19013 / LMG 5710 / NBRC 13948 / NRRL B-527 / VKM B-1787 / 2291 / W)</name>
    <dbReference type="NCBI Taxonomy" id="272562"/>
    <lineage>
        <taxon>Bacteria</taxon>
        <taxon>Bacillati</taxon>
        <taxon>Bacillota</taxon>
        <taxon>Clostridia</taxon>
        <taxon>Eubacteriales</taxon>
        <taxon>Clostridiaceae</taxon>
        <taxon>Clostridium</taxon>
    </lineage>
</organism>